<name>SYP_SHEPC</name>
<feature type="chain" id="PRO_1000069162" description="Proline--tRNA ligase">
    <location>
        <begin position="1"/>
        <end position="571"/>
    </location>
</feature>
<comment type="function">
    <text evidence="1">Catalyzes the attachment of proline to tRNA(Pro) in a two-step reaction: proline is first activated by ATP to form Pro-AMP and then transferred to the acceptor end of tRNA(Pro). As ProRS can inadvertently accommodate and process non-cognate amino acids such as alanine and cysteine, to avoid such errors it has two additional distinct editing activities against alanine. One activity is designated as 'pretransfer' editing and involves the tRNA(Pro)-independent hydrolysis of activated Ala-AMP. The other activity is designated 'posttransfer' editing and involves deacylation of mischarged Ala-tRNA(Pro). The misacylated Cys-tRNA(Pro) is not edited by ProRS.</text>
</comment>
<comment type="catalytic activity">
    <reaction evidence="1">
        <text>tRNA(Pro) + L-proline + ATP = L-prolyl-tRNA(Pro) + AMP + diphosphate</text>
        <dbReference type="Rhea" id="RHEA:14305"/>
        <dbReference type="Rhea" id="RHEA-COMP:9700"/>
        <dbReference type="Rhea" id="RHEA-COMP:9702"/>
        <dbReference type="ChEBI" id="CHEBI:30616"/>
        <dbReference type="ChEBI" id="CHEBI:33019"/>
        <dbReference type="ChEBI" id="CHEBI:60039"/>
        <dbReference type="ChEBI" id="CHEBI:78442"/>
        <dbReference type="ChEBI" id="CHEBI:78532"/>
        <dbReference type="ChEBI" id="CHEBI:456215"/>
        <dbReference type="EC" id="6.1.1.15"/>
    </reaction>
</comment>
<comment type="subunit">
    <text evidence="1">Homodimer.</text>
</comment>
<comment type="subcellular location">
    <subcellularLocation>
        <location evidence="1">Cytoplasm</location>
    </subcellularLocation>
</comment>
<comment type="domain">
    <text evidence="1">Consists of three domains: the N-terminal catalytic domain, the editing domain and the C-terminal anticodon-binding domain.</text>
</comment>
<comment type="similarity">
    <text evidence="1">Belongs to the class-II aminoacyl-tRNA synthetase family. ProS type 1 subfamily.</text>
</comment>
<proteinExistence type="inferred from homology"/>
<sequence>MRVSKYLLSTQKETPANAEVISHQLMLRAGMIRRNASGLYSYLPTGLRVLRKVEAIVREEMNKAGAIEILMPMVQPADLWVETGRWDKFGPELLRFKDRHNRDFVLGPTHEEVITDLIRKEVSSYKQLPLNLYQIQTKFRDEVRPRFGMMRSREFLMKDAYSFHLDVDTMNETYEAMYTAYSNILSRMGLAFRPVLADTGSIGGSMSHEFHVLAQSGEDLIAYSTGSDYAANIEKAESPMPTEPRGAATEALRLVDTPNAKTIAELVEQFGLDITKTVKTLIVKGATEAAPLVALIVRGDHELNEVKADKLDLVASPLEMAPEALIRDAIGAGPGSLGPVGLNMPIIIDHSVSVMSDFAAGANVDDKHYFGINWERDLPLAQAADIRNVVEGEPTPDGLGTYAMARGIEVGHIFQLGTNYSKSMNATVLDENGKSQVLLMGCYGVGVSRIVAAAIEQNFDDRGIVWPEAIAPFSVGILPMNMHKSHRVTDIAEQLYKDLSAAGIEVLLDDRKERPGVMFADMELIGIPHTVVIGDRNIDAGVFEYKNRRTGEKQDIPFDQLVDFLKNAVKS</sequence>
<dbReference type="EC" id="6.1.1.15" evidence="1"/>
<dbReference type="EMBL" id="CP000681">
    <property type="protein sequence ID" value="ABP76239.1"/>
    <property type="molecule type" value="Genomic_DNA"/>
</dbReference>
<dbReference type="SMR" id="A4Y8F6"/>
<dbReference type="STRING" id="319224.Sputcn32_2518"/>
<dbReference type="KEGG" id="spc:Sputcn32_2518"/>
<dbReference type="eggNOG" id="COG0442">
    <property type="taxonomic scope" value="Bacteria"/>
</dbReference>
<dbReference type="HOGENOM" id="CLU_016739_0_0_6"/>
<dbReference type="GO" id="GO:0005829">
    <property type="term" value="C:cytosol"/>
    <property type="evidence" value="ECO:0007669"/>
    <property type="project" value="TreeGrafter"/>
</dbReference>
<dbReference type="GO" id="GO:0002161">
    <property type="term" value="F:aminoacyl-tRNA deacylase activity"/>
    <property type="evidence" value="ECO:0007669"/>
    <property type="project" value="InterPro"/>
</dbReference>
<dbReference type="GO" id="GO:0005524">
    <property type="term" value="F:ATP binding"/>
    <property type="evidence" value="ECO:0007669"/>
    <property type="project" value="UniProtKB-UniRule"/>
</dbReference>
<dbReference type="GO" id="GO:0004827">
    <property type="term" value="F:proline-tRNA ligase activity"/>
    <property type="evidence" value="ECO:0007669"/>
    <property type="project" value="UniProtKB-UniRule"/>
</dbReference>
<dbReference type="GO" id="GO:0006433">
    <property type="term" value="P:prolyl-tRNA aminoacylation"/>
    <property type="evidence" value="ECO:0007669"/>
    <property type="project" value="UniProtKB-UniRule"/>
</dbReference>
<dbReference type="CDD" id="cd04334">
    <property type="entry name" value="ProRS-INS"/>
    <property type="match status" value="1"/>
</dbReference>
<dbReference type="CDD" id="cd00861">
    <property type="entry name" value="ProRS_anticodon_short"/>
    <property type="match status" value="1"/>
</dbReference>
<dbReference type="CDD" id="cd00779">
    <property type="entry name" value="ProRS_core_prok"/>
    <property type="match status" value="1"/>
</dbReference>
<dbReference type="FunFam" id="3.30.930.10:FF:000043">
    <property type="entry name" value="Proline--tRNA ligase"/>
    <property type="match status" value="1"/>
</dbReference>
<dbReference type="FunFam" id="3.30.930.10:FF:000062">
    <property type="entry name" value="Proline--tRNA ligase"/>
    <property type="match status" value="1"/>
</dbReference>
<dbReference type="FunFam" id="3.40.50.800:FF:000006">
    <property type="entry name" value="Proline--tRNA ligase"/>
    <property type="match status" value="1"/>
</dbReference>
<dbReference type="FunFam" id="3.90.960.10:FF:000001">
    <property type="entry name" value="Proline--tRNA ligase"/>
    <property type="match status" value="1"/>
</dbReference>
<dbReference type="Gene3D" id="3.40.50.800">
    <property type="entry name" value="Anticodon-binding domain"/>
    <property type="match status" value="1"/>
</dbReference>
<dbReference type="Gene3D" id="3.30.930.10">
    <property type="entry name" value="Bira Bifunctional Protein, Domain 2"/>
    <property type="match status" value="2"/>
</dbReference>
<dbReference type="Gene3D" id="3.90.960.10">
    <property type="entry name" value="YbaK/aminoacyl-tRNA synthetase-associated domain"/>
    <property type="match status" value="1"/>
</dbReference>
<dbReference type="HAMAP" id="MF_01569">
    <property type="entry name" value="Pro_tRNA_synth_type1"/>
    <property type="match status" value="1"/>
</dbReference>
<dbReference type="InterPro" id="IPR002314">
    <property type="entry name" value="aa-tRNA-synt_IIb"/>
</dbReference>
<dbReference type="InterPro" id="IPR006195">
    <property type="entry name" value="aa-tRNA-synth_II"/>
</dbReference>
<dbReference type="InterPro" id="IPR045864">
    <property type="entry name" value="aa-tRNA-synth_II/BPL/LPL"/>
</dbReference>
<dbReference type="InterPro" id="IPR004154">
    <property type="entry name" value="Anticodon-bd"/>
</dbReference>
<dbReference type="InterPro" id="IPR036621">
    <property type="entry name" value="Anticodon-bd_dom_sf"/>
</dbReference>
<dbReference type="InterPro" id="IPR002316">
    <property type="entry name" value="Pro-tRNA-ligase_IIa"/>
</dbReference>
<dbReference type="InterPro" id="IPR004500">
    <property type="entry name" value="Pro-tRNA-synth_IIa_bac-type"/>
</dbReference>
<dbReference type="InterPro" id="IPR023717">
    <property type="entry name" value="Pro-tRNA-Synthase_IIa_type1"/>
</dbReference>
<dbReference type="InterPro" id="IPR050062">
    <property type="entry name" value="Pro-tRNA_synthetase"/>
</dbReference>
<dbReference type="InterPro" id="IPR044140">
    <property type="entry name" value="ProRS_anticodon_short"/>
</dbReference>
<dbReference type="InterPro" id="IPR033730">
    <property type="entry name" value="ProRS_core_prok"/>
</dbReference>
<dbReference type="InterPro" id="IPR036754">
    <property type="entry name" value="YbaK/aa-tRNA-synt-asso_dom_sf"/>
</dbReference>
<dbReference type="InterPro" id="IPR007214">
    <property type="entry name" value="YbaK/aa-tRNA-synth-assoc-dom"/>
</dbReference>
<dbReference type="NCBIfam" id="NF006625">
    <property type="entry name" value="PRK09194.1"/>
    <property type="match status" value="1"/>
</dbReference>
<dbReference type="NCBIfam" id="TIGR00409">
    <property type="entry name" value="proS_fam_II"/>
    <property type="match status" value="1"/>
</dbReference>
<dbReference type="PANTHER" id="PTHR42753">
    <property type="entry name" value="MITOCHONDRIAL RIBOSOME PROTEIN L39/PROLYL-TRNA LIGASE FAMILY MEMBER"/>
    <property type="match status" value="1"/>
</dbReference>
<dbReference type="PANTHER" id="PTHR42753:SF2">
    <property type="entry name" value="PROLINE--TRNA LIGASE"/>
    <property type="match status" value="1"/>
</dbReference>
<dbReference type="Pfam" id="PF03129">
    <property type="entry name" value="HGTP_anticodon"/>
    <property type="match status" value="1"/>
</dbReference>
<dbReference type="Pfam" id="PF00587">
    <property type="entry name" value="tRNA-synt_2b"/>
    <property type="match status" value="1"/>
</dbReference>
<dbReference type="Pfam" id="PF04073">
    <property type="entry name" value="tRNA_edit"/>
    <property type="match status" value="1"/>
</dbReference>
<dbReference type="PIRSF" id="PIRSF001535">
    <property type="entry name" value="ProRS_1"/>
    <property type="match status" value="1"/>
</dbReference>
<dbReference type="PRINTS" id="PR01046">
    <property type="entry name" value="TRNASYNTHPRO"/>
</dbReference>
<dbReference type="SUPFAM" id="SSF52954">
    <property type="entry name" value="Class II aaRS ABD-related"/>
    <property type="match status" value="1"/>
</dbReference>
<dbReference type="SUPFAM" id="SSF55681">
    <property type="entry name" value="Class II aaRS and biotin synthetases"/>
    <property type="match status" value="1"/>
</dbReference>
<dbReference type="SUPFAM" id="SSF55826">
    <property type="entry name" value="YbaK/ProRS associated domain"/>
    <property type="match status" value="1"/>
</dbReference>
<dbReference type="PROSITE" id="PS50862">
    <property type="entry name" value="AA_TRNA_LIGASE_II"/>
    <property type="match status" value="1"/>
</dbReference>
<organism>
    <name type="scientific">Shewanella putrefaciens (strain CN-32 / ATCC BAA-453)</name>
    <dbReference type="NCBI Taxonomy" id="319224"/>
    <lineage>
        <taxon>Bacteria</taxon>
        <taxon>Pseudomonadati</taxon>
        <taxon>Pseudomonadota</taxon>
        <taxon>Gammaproteobacteria</taxon>
        <taxon>Alteromonadales</taxon>
        <taxon>Shewanellaceae</taxon>
        <taxon>Shewanella</taxon>
    </lineage>
</organism>
<evidence type="ECO:0000255" key="1">
    <source>
        <dbReference type="HAMAP-Rule" id="MF_01569"/>
    </source>
</evidence>
<reference key="1">
    <citation type="submission" date="2007-04" db="EMBL/GenBank/DDBJ databases">
        <title>Complete sequence of Shewanella putrefaciens CN-32.</title>
        <authorList>
            <consortium name="US DOE Joint Genome Institute"/>
            <person name="Copeland A."/>
            <person name="Lucas S."/>
            <person name="Lapidus A."/>
            <person name="Barry K."/>
            <person name="Detter J.C."/>
            <person name="Glavina del Rio T."/>
            <person name="Hammon N."/>
            <person name="Israni S."/>
            <person name="Dalin E."/>
            <person name="Tice H."/>
            <person name="Pitluck S."/>
            <person name="Chain P."/>
            <person name="Malfatti S."/>
            <person name="Shin M."/>
            <person name="Vergez L."/>
            <person name="Schmutz J."/>
            <person name="Larimer F."/>
            <person name="Land M."/>
            <person name="Hauser L."/>
            <person name="Kyrpides N."/>
            <person name="Mikhailova N."/>
            <person name="Romine M.F."/>
            <person name="Fredrickson J."/>
            <person name="Tiedje J."/>
            <person name="Richardson P."/>
        </authorList>
    </citation>
    <scope>NUCLEOTIDE SEQUENCE [LARGE SCALE GENOMIC DNA]</scope>
    <source>
        <strain>CN-32 / ATCC BAA-453</strain>
    </source>
</reference>
<accession>A4Y8F6</accession>
<protein>
    <recommendedName>
        <fullName evidence="1">Proline--tRNA ligase</fullName>
        <ecNumber evidence="1">6.1.1.15</ecNumber>
    </recommendedName>
    <alternativeName>
        <fullName evidence="1">Prolyl-tRNA synthetase</fullName>
        <shortName evidence="1">ProRS</shortName>
    </alternativeName>
</protein>
<gene>
    <name evidence="1" type="primary">proS</name>
    <name type="ordered locus">Sputcn32_2518</name>
</gene>
<keyword id="KW-0030">Aminoacyl-tRNA synthetase</keyword>
<keyword id="KW-0067">ATP-binding</keyword>
<keyword id="KW-0963">Cytoplasm</keyword>
<keyword id="KW-0436">Ligase</keyword>
<keyword id="KW-0547">Nucleotide-binding</keyword>
<keyword id="KW-0648">Protein biosynthesis</keyword>